<dbReference type="EC" id="3.4.21.-" evidence="1"/>
<dbReference type="GO" id="GO:0005576">
    <property type="term" value="C:extracellular region"/>
    <property type="evidence" value="ECO:0007669"/>
    <property type="project" value="UniProtKB-SubCell"/>
</dbReference>
<dbReference type="GO" id="GO:0008236">
    <property type="term" value="F:serine-type peptidase activity"/>
    <property type="evidence" value="ECO:0007669"/>
    <property type="project" value="UniProtKB-KW"/>
</dbReference>
<dbReference type="GO" id="GO:0090729">
    <property type="term" value="F:toxin activity"/>
    <property type="evidence" value="ECO:0007669"/>
    <property type="project" value="UniProtKB-KW"/>
</dbReference>
<dbReference type="GO" id="GO:0006508">
    <property type="term" value="P:proteolysis"/>
    <property type="evidence" value="ECO:0007669"/>
    <property type="project" value="UniProtKB-KW"/>
</dbReference>
<accession>C0HJR6</accession>
<keyword id="KW-0903">Direct protein sequencing</keyword>
<keyword id="KW-1015">Disulfide bond</keyword>
<keyword id="KW-0378">Hydrolase</keyword>
<keyword id="KW-0645">Protease</keyword>
<keyword id="KW-0964">Secreted</keyword>
<keyword id="KW-0720">Serine protease</keyword>
<keyword id="KW-0800">Toxin</keyword>
<protein>
    <recommendedName>
        <fullName evidence="4">Thrombin-like enzyme collinein-2</fullName>
        <shortName evidence="4">SVTLE collinein-2</shortName>
        <ecNumber evidence="1">3.4.21.-</ecNumber>
    </recommendedName>
    <alternativeName>
        <fullName evidence="1">Fibrinogen-clotting enzyme</fullName>
    </alternativeName>
    <alternativeName>
        <fullName evidence="4">Snake venom serine protease</fullName>
        <shortName evidence="4">SVSP</shortName>
    </alternativeName>
</protein>
<name>VSP2_CRODO</name>
<sequence length="29" mass="3040">TALPQLRLPATSRILCAGVLEGGIDTCNR</sequence>
<feature type="chain" id="PRO_0000436479" description="Thrombin-like enzyme collinein-2" evidence="3">
    <location>
        <begin position="1" status="less than"/>
        <end position="29" status="greater than"/>
    </location>
</feature>
<feature type="disulfide bond" evidence="2">
    <location>
        <begin position="16"/>
        <end status="unknown"/>
    </location>
</feature>
<feature type="disulfide bond" evidence="2">
    <location>
        <begin position="27"/>
        <end status="unknown"/>
    </location>
</feature>
<feature type="non-terminal residue" evidence="4">
    <location>
        <position position="1"/>
    </location>
</feature>
<feature type="non-terminal residue" evidence="4">
    <location>
        <position position="29"/>
    </location>
</feature>
<organism evidence="4">
    <name type="scientific">Crotalus durissus collilineatus</name>
    <name type="common">Brazilian rattlesnake</name>
    <dbReference type="NCBI Taxonomy" id="221569"/>
    <lineage>
        <taxon>Eukaryota</taxon>
        <taxon>Metazoa</taxon>
        <taxon>Chordata</taxon>
        <taxon>Craniata</taxon>
        <taxon>Vertebrata</taxon>
        <taxon>Euteleostomi</taxon>
        <taxon>Lepidosauria</taxon>
        <taxon>Squamata</taxon>
        <taxon>Bifurcata</taxon>
        <taxon>Unidentata</taxon>
        <taxon>Episquamata</taxon>
        <taxon>Toxicofera</taxon>
        <taxon>Serpentes</taxon>
        <taxon>Colubroidea</taxon>
        <taxon>Viperidae</taxon>
        <taxon>Crotalinae</taxon>
        <taxon>Crotalus</taxon>
    </lineage>
</organism>
<reference evidence="5" key="1">
    <citation type="journal article" date="2015" name="Appl. Microbiol. Biotechnol.">
        <title>Expression of a new serine protease from Crotalus durissus collilineatus venom in Pichia pastoris and functional comparison with the native enzyme.</title>
        <authorList>
            <person name="Boldrini-Franca J."/>
            <person name="Santos Rodrigues R."/>
            <person name="Santos-Silva L.K."/>
            <person name="de Souza D.L."/>
            <person name="Gomes M.S."/>
            <person name="Cologna C.T."/>
            <person name="de Pauw E."/>
            <person name="Quinton L."/>
            <person name="Henrique-Silva F."/>
            <person name="de Melo Rodrigues V."/>
            <person name="Arantes E.C."/>
        </authorList>
    </citation>
    <scope>PROTEIN SEQUENCE</scope>
    <scope>SUBCELLULAR LOCATION</scope>
    <scope>MASS SPECTROMETRY</scope>
    <scope>IDENTIFICATION BY MASS SPECTROMETRY</scope>
    <source>
        <tissue evidence="4">Venom</tissue>
    </source>
</reference>
<proteinExistence type="evidence at protein level"/>
<comment type="function">
    <text evidence="1">Thrombin-like snake venom serine protease.</text>
</comment>
<comment type="subunit">
    <text evidence="6">Monomer.</text>
</comment>
<comment type="subcellular location">
    <subcellularLocation>
        <location evidence="3">Secreted</location>
    </subcellularLocation>
</comment>
<comment type="tissue specificity">
    <text evidence="6">Expressed by the venom gland.</text>
</comment>
<comment type="mass spectrometry" mass="28388.0" method="Electrospray" evidence="3"/>
<comment type="similarity">
    <text evidence="5">Belongs to the peptidase S1 family. Snake venom subfamily.</text>
</comment>
<evidence type="ECO:0000250" key="1">
    <source>
        <dbReference type="UniProtKB" id="A0A0S4FKT4"/>
    </source>
</evidence>
<evidence type="ECO:0000250" key="2">
    <source>
        <dbReference type="UniProtKB" id="Q9PSN3"/>
    </source>
</evidence>
<evidence type="ECO:0000269" key="3">
    <source>
    </source>
</evidence>
<evidence type="ECO:0000303" key="4">
    <source>
    </source>
</evidence>
<evidence type="ECO:0000305" key="5"/>
<evidence type="ECO:0000305" key="6">
    <source>
    </source>
</evidence>